<protein>
    <recommendedName>
        <fullName evidence="2">Mannosylglucosyl-3-phosphoglycerate synthase</fullName>
        <ecNumber evidence="1">2.4.1.270</ecNumber>
    </recommendedName>
</protein>
<feature type="chain" id="PRO_0000431555" description="Mannosylglucosyl-3-phosphoglycerate synthase">
    <location>
        <begin position="1"/>
        <end position="505"/>
    </location>
</feature>
<organism>
    <name type="scientific">Petrotoga mobilis (strain DSM 10674 / SJ95)</name>
    <dbReference type="NCBI Taxonomy" id="403833"/>
    <lineage>
        <taxon>Bacteria</taxon>
        <taxon>Thermotogati</taxon>
        <taxon>Thermotogota</taxon>
        <taxon>Thermotogae</taxon>
        <taxon>Petrotogales</taxon>
        <taxon>Petrotogaceae</taxon>
        <taxon>Petrotoga</taxon>
    </lineage>
</organism>
<dbReference type="EC" id="2.4.1.270" evidence="1"/>
<dbReference type="EMBL" id="CP000879">
    <property type="protein sequence ID" value="ABX31862.1"/>
    <property type="molecule type" value="Genomic_DNA"/>
</dbReference>
<dbReference type="RefSeq" id="WP_012208963.1">
    <property type="nucleotide sequence ID" value="NC_010003.1"/>
</dbReference>
<dbReference type="SMR" id="A9BHJ0"/>
<dbReference type="STRING" id="403833.Pmob_1143"/>
<dbReference type="CAZy" id="GT4">
    <property type="family name" value="Glycosyltransferase Family 4"/>
</dbReference>
<dbReference type="KEGG" id="pmo:Pmob_1143"/>
<dbReference type="eggNOG" id="COG0438">
    <property type="taxonomic scope" value="Bacteria"/>
</dbReference>
<dbReference type="HOGENOM" id="CLU_586268_0_0_0"/>
<dbReference type="OrthoDB" id="9764674at2"/>
<dbReference type="BioCyc" id="MetaCyc:MONOMER-16132"/>
<dbReference type="BRENDA" id="2.4.1.270">
    <property type="organism ID" value="11874"/>
</dbReference>
<dbReference type="Proteomes" id="UP000000789">
    <property type="component" value="Chromosome"/>
</dbReference>
<dbReference type="GO" id="GO:0016757">
    <property type="term" value="F:glycosyltransferase activity"/>
    <property type="evidence" value="ECO:0007669"/>
    <property type="project" value="UniProtKB-KW"/>
</dbReference>
<dbReference type="Gene3D" id="3.40.50.2000">
    <property type="entry name" value="Glycogen Phosphorylase B"/>
    <property type="match status" value="2"/>
</dbReference>
<dbReference type="SUPFAM" id="SSF53756">
    <property type="entry name" value="UDP-Glycosyltransferase/glycogen phosphorylase"/>
    <property type="match status" value="1"/>
</dbReference>
<sequence length="505" mass="59124">MNNLYIFHYHYIKGGVSTVVRNIVKSLKDAYKITLFGSKKMGIDGIEEVLSYENVDFIDFPELGYIYYDSTDYKTFLELKESIKNKLNNYHDERAIYWAHNYNLGKNPAFTEAFKEFITTKNIPTIIQIHDFPECARWENYSFIRKFINSSLYPIRKNIQYATINLSDYNRLIKCGIPSENAFYLPNAVEFAKNKDKIDDIDKDEVINKLKKLGYNVDPTNKNILYPTRTIRRKNILEAVLINRLYGKSNLLVTLPANSDKERPYEKVVKETFESEKVKGAWAISAKDPSLFPYILNISDLFFSSSVLEGFGMIYLESKFNEKNFLTRKLDVIEDFKNIKEISYYDRFLVSLSPKEINKVKEKYEEQINKIPISEENKNHLRQDLNNKFDKDLIDFSFLPVELQKKFCMEEEAKLNDLKEINKEIFDKIEMLTSTNHIDQGINLEDFSLKAYKSKIFLLLDKVQARGNAPKGVQGSTKEIEDTIIDENILKSFLTIDNIRLLFSY</sequence>
<reference key="1">
    <citation type="submission" date="2007-11" db="EMBL/GenBank/DDBJ databases">
        <title>Complete sequence of Petroga mobilis SJ95.</title>
        <authorList>
            <consortium name="US DOE Joint Genome Institute"/>
            <person name="Copeland A."/>
            <person name="Lucas S."/>
            <person name="Lapidus A."/>
            <person name="Barry K."/>
            <person name="Glavina del Rio T."/>
            <person name="Dalin E."/>
            <person name="Tice H."/>
            <person name="Pitluck S."/>
            <person name="Meincke L."/>
            <person name="Brettin T."/>
            <person name="Bruce D."/>
            <person name="Detter J.C."/>
            <person name="Han C."/>
            <person name="Kuske C.R."/>
            <person name="Schmutz J."/>
            <person name="Larimer F."/>
            <person name="Land M."/>
            <person name="Hauser L."/>
            <person name="Kyrpides N."/>
            <person name="Mikhailova N."/>
            <person name="Noll K."/>
            <person name="Richardson P."/>
        </authorList>
    </citation>
    <scope>NUCLEOTIDE SEQUENCE [LARGE SCALE GENOMIC DNA]</scope>
    <source>
        <strain>DSM 10674 / SJ95</strain>
    </source>
</reference>
<reference key="2">
    <citation type="journal article" date="2010" name="J. Bacteriol.">
        <title>Two alternative pathways for the synthesis of the rare compatible solute mannosylglucosylglycerate in Petrotoga mobilis.</title>
        <authorList>
            <person name="Fernandes C."/>
            <person name="Mendes V."/>
            <person name="Costa J."/>
            <person name="Empadinhas N."/>
            <person name="Jorge C."/>
            <person name="Lamosa P."/>
            <person name="Santos H."/>
            <person name="da Costa M.S."/>
        </authorList>
    </citation>
    <scope>FUNCTION</scope>
    <scope>CATALYTIC ACTIVITY</scope>
    <scope>ACTIVITY REGULATION</scope>
    <scope>BIOPHYSICOCHEMICAL PROPERTIES</scope>
    <scope>SUBUNIT</scope>
    <source>
        <strain>DSM 10674 / SJ95</strain>
    </source>
</reference>
<evidence type="ECO:0000269" key="1">
    <source>
    </source>
</evidence>
<evidence type="ECO:0000303" key="2">
    <source>
    </source>
</evidence>
<evidence type="ECO:0000312" key="3">
    <source>
        <dbReference type="EMBL" id="ABX31862.1"/>
    </source>
</evidence>
<keyword id="KW-0328">Glycosyltransferase</keyword>
<keyword id="KW-0808">Transferase</keyword>
<accession>A9BHJ0</accession>
<gene>
    <name evidence="2" type="primary">mggA</name>
    <name evidence="3" type="ordered locus">Pmob_1143</name>
</gene>
<comment type="function">
    <text evidence="1">Involved in the biosynthesis of the compatible solute mannosylglucosylglycerate through a phosphorylating pathway. Catalyzes the conversion of glucosyl-3-phosphoglycerate (GPG) to mannosylglucosyl-3-phosphoglycerate (MGPG).</text>
</comment>
<comment type="catalytic activity">
    <reaction evidence="1">
        <text>(2R)-2-O-(alpha-D-glucopyranosyl)-3-phospho-glycerate + GDP-alpha-D-mannose = (2R)-2-O-[alpha-D-mannopyranosyl-(1-&gt;2)-alpha-D-glucopyranosyl]-3-phospho-glycerate + GDP + H(+)</text>
        <dbReference type="Rhea" id="RHEA:31323"/>
        <dbReference type="ChEBI" id="CHEBI:15378"/>
        <dbReference type="ChEBI" id="CHEBI:57527"/>
        <dbReference type="ChEBI" id="CHEBI:58189"/>
        <dbReference type="ChEBI" id="CHEBI:62600"/>
        <dbReference type="ChEBI" id="CHEBI:62602"/>
        <dbReference type="EC" id="2.4.1.270"/>
    </reaction>
</comment>
<comment type="activity regulation">
    <text evidence="1">Not strictly dependent on divalent cations, but the presence of Mn(2+), Ca(2+), Mg(2+) or Co(2+) stimulates activity.</text>
</comment>
<comment type="biophysicochemical properties">
    <kinetics>
        <KM evidence="1">0.8 mM for glucosyl-3-phosphoglycerate (at 60 degrees Celsius)</KM>
        <KM evidence="1">1 mM for GDP-mannose (at 60 degrees Celsius)</KM>
        <Vmax evidence="1">30.3 umol/min/mg enzyme toward glucosyl-3-phosphoglycerate (at 60 degrees Celsius)</Vmax>
        <Vmax evidence="1">37.0 umol/min/mg enzyme toward GDP-mannose (at 60 degrees Celsius)</Vmax>
    </kinetics>
    <phDependence>
        <text evidence="1">Optimum pH is 9.0 (at 60 degrees Celsius).</text>
    </phDependence>
    <temperatureDependence>
        <text evidence="1">Optimum temperature is 90 degrees Celsius.</text>
    </temperatureDependence>
</comment>
<comment type="subunit">
    <text evidence="1">Monomer in solution.</text>
</comment>
<name>MGGA_PETMO</name>
<proteinExistence type="evidence at protein level"/>